<feature type="chain" id="PRO_0000447160" description="Protein YoaM">
    <location>
        <begin position="1"/>
        <end position="11"/>
    </location>
</feature>
<organism>
    <name type="scientific">Escherichia coli (strain K12)</name>
    <dbReference type="NCBI Taxonomy" id="83333"/>
    <lineage>
        <taxon>Bacteria</taxon>
        <taxon>Pseudomonadati</taxon>
        <taxon>Pseudomonadota</taxon>
        <taxon>Gammaproteobacteria</taxon>
        <taxon>Enterobacterales</taxon>
        <taxon>Enterobacteriaceae</taxon>
        <taxon>Escherichia</taxon>
    </lineage>
</organism>
<sequence>MSVSCWEFNAG</sequence>
<proteinExistence type="evidence at protein level"/>
<name>YOAM_ECOLI</name>
<protein>
    <recommendedName>
        <fullName evidence="2">Protein YoaM</fullName>
    </recommendedName>
</protein>
<evidence type="ECO:0000269" key="1">
    <source>
    </source>
</evidence>
<evidence type="ECO:0000303" key="2">
    <source>
    </source>
</evidence>
<evidence type="ECO:0000312" key="3">
    <source>
        <dbReference type="EMBL" id="QNV50532.1"/>
    </source>
</evidence>
<reference key="1">
    <citation type="journal article" date="1997" name="Science">
        <title>The complete genome sequence of Escherichia coli K-12.</title>
        <authorList>
            <person name="Blattner F.R."/>
            <person name="Plunkett G. III"/>
            <person name="Bloch C.A."/>
            <person name="Perna N.T."/>
            <person name="Burland V."/>
            <person name="Riley M."/>
            <person name="Collado-Vides J."/>
            <person name="Glasner J.D."/>
            <person name="Rode C.K."/>
            <person name="Mayhew G.F."/>
            <person name="Gregor J."/>
            <person name="Davis N.W."/>
            <person name="Kirkpatrick H.A."/>
            <person name="Goeden M.A."/>
            <person name="Rose D.J."/>
            <person name="Mau B."/>
            <person name="Shao Y."/>
        </authorList>
    </citation>
    <scope>NUCLEOTIDE SEQUENCE [LARGE SCALE GENOMIC DNA]</scope>
    <source>
        <strain>K12 / MG1655 / ATCC 47076</strain>
    </source>
</reference>
<reference key="2">
    <citation type="journal article" date="2019" name="MBio">
        <title>Identifying small proteins by ribosome profiling with stalled initiation complexes.</title>
        <authorList>
            <person name="Weaver J."/>
            <person name="Mohammad F."/>
            <person name="Buskirk A.R."/>
            <person name="Storz G."/>
        </authorList>
    </citation>
    <scope>IDENTIFICATION</scope>
    <scope>INDUCTION</scope>
    <source>
        <strain>K12 / MG1655 / ATCC 47076</strain>
    </source>
</reference>
<gene>
    <name evidence="2" type="primary">yoaM</name>
    <name evidence="3" type="ordered locus">b4779</name>
</gene>
<comment type="induction">
    <text evidence="1">A fusion of the 5' UTR and initial codons of the gene with lacZ allows expression of beta-galactosidase, suggesting this protein is expressed (at protein level).</text>
</comment>
<comment type="miscellaneous">
    <text evidence="1">The start codon of yoaM overlaps with the start codon of nrdB on the other strand.</text>
</comment>
<dbReference type="EMBL" id="U00096">
    <property type="protein sequence ID" value="QNV50532.1"/>
    <property type="molecule type" value="Genomic_DNA"/>
</dbReference>
<dbReference type="InParanoid" id="P0DSF7"/>
<dbReference type="BioCyc" id="EcoCyc:MONOMER0-4491"/>
<dbReference type="Proteomes" id="UP000000625">
    <property type="component" value="Chromosome"/>
</dbReference>
<accession>P0DSF7</accession>
<accession>A0A7H2C785</accession>
<keyword id="KW-1185">Reference proteome</keyword>